<accession>Q2H0U8</accession>
<sequence length="946" mass="106889">MSTSTAEPSGLDNVRHRARAASSISTDTAPEAVTEKEREARPNKTYGRTPDGTVFVVPETHDMVSQLLDPREPKNLSDVLVLAILALHIWAAYALPSSLKRPIFALIFLFWRASYNVGIGYLLTVQSNYKLMVIWAKRMQLFENPSTGKNPRPWLYQLLQNELEAKIPKDYKMAEAPLEYNTWLVFRRVVDLILMCDFVSYCLFAIVCAHKPVSEGFAIAAARWVIGIALVGFNLWVKLDAHRVVKDYAWYWGDFFYLIEQELTFDGVFEMAPHPMYSIGYAGYYGISMMAASYDVLFISILAHAAQFAFLAIVENPHIEKTYNPPPPRQRAESEVSSSEATAESFRKSTKTPSTPLPVHNMVGVHNFDPFRITDYTSVLLVGCFAALALVTPSTPIYQALFVVNAIVWRLWYSVGLGVILTKQSNEKMFTRHFLKFGETAAEAWRQWKGMYHLSMTLCYVSFLAACWKMYNYPADWGYGWVLLKHVVGISLVALQIWTATSIYESLGEFGWFYGDFFFDSTGKLTYKSIYRFLNNPERVIGTAGLWGMALITWSSPIFLIALIGHILTLGFISYVEKPHMQKIYGENLRQEAGLTKFIKRSLPEPVKGLQMSVDKVWEDSKHFFDDFVDVARTKLGAGSSTIARDTSALFNKYPARLTLSRISPDLAGYDPKHYSISMEGTPLVGADEKATGKESANARVSKAVKTKVFEYGAPIRVKWTAPANHSKKDWVGLYMVTDNRSREVTEVPTLGRWVPARPSQYDTTTDEGIVSWDQPAKSPCPEVDFVQGEMVFEGDKLWWTQGVFEFRYHHNSGHNVMAISEPFEVRLAKVDDEDTEVTGPREVEAALLPIVRNCLDRDPDIAPATVEERFGAHVERDSKYAKRVVYAIHHMFGVEFAPAVVPADGDVRKLAWRICSAKEVLAPYSMSQRLQSPSTPVRDKFPDSL</sequence>
<dbReference type="EC" id="2.1.1.17" evidence="1"/>
<dbReference type="EMBL" id="CH408032">
    <property type="protein sequence ID" value="EAQ87979.1"/>
    <property type="molecule type" value="Genomic_DNA"/>
</dbReference>
<dbReference type="RefSeq" id="XP_001223812.1">
    <property type="nucleotide sequence ID" value="XM_001223811.1"/>
</dbReference>
<dbReference type="SMR" id="Q2H0U8"/>
<dbReference type="FunCoup" id="Q2H0U8">
    <property type="interactions" value="50"/>
</dbReference>
<dbReference type="STRING" id="306901.Q2H0U8"/>
<dbReference type="GeneID" id="4392921"/>
<dbReference type="VEuPathDB" id="FungiDB:CHGG_04598"/>
<dbReference type="eggNOG" id="ENOG502QRGH">
    <property type="taxonomic scope" value="Eukaryota"/>
</dbReference>
<dbReference type="HOGENOM" id="CLU_005987_0_0_1"/>
<dbReference type="InParanoid" id="Q2H0U8"/>
<dbReference type="OMA" id="RIWYSVG"/>
<dbReference type="OrthoDB" id="4583at2759"/>
<dbReference type="UniPathway" id="UPA00753"/>
<dbReference type="Proteomes" id="UP000001056">
    <property type="component" value="Unassembled WGS sequence"/>
</dbReference>
<dbReference type="GO" id="GO:0032541">
    <property type="term" value="C:cortical endoplasmic reticulum"/>
    <property type="evidence" value="ECO:0007669"/>
    <property type="project" value="EnsemblFungi"/>
</dbReference>
<dbReference type="GO" id="GO:0005789">
    <property type="term" value="C:endoplasmic reticulum membrane"/>
    <property type="evidence" value="ECO:0007669"/>
    <property type="project" value="UniProtKB-SubCell"/>
</dbReference>
<dbReference type="GO" id="GO:0097038">
    <property type="term" value="C:perinuclear endoplasmic reticulum"/>
    <property type="evidence" value="ECO:0007669"/>
    <property type="project" value="EnsemblFungi"/>
</dbReference>
<dbReference type="GO" id="GO:0004608">
    <property type="term" value="F:phosphatidylethanolamine N-methyltransferase activity"/>
    <property type="evidence" value="ECO:0007669"/>
    <property type="project" value="UniProtKB-UniRule"/>
</dbReference>
<dbReference type="GO" id="GO:0032259">
    <property type="term" value="P:methylation"/>
    <property type="evidence" value="ECO:0007669"/>
    <property type="project" value="UniProtKB-KW"/>
</dbReference>
<dbReference type="GO" id="GO:0006656">
    <property type="term" value="P:phosphatidylcholine biosynthetic process"/>
    <property type="evidence" value="ECO:0007669"/>
    <property type="project" value="UniProtKB-UniRule"/>
</dbReference>
<dbReference type="FunFam" id="2.60.40.2840:FF:000006">
    <property type="entry name" value="Phosphatidylethanolamine N-methyltransferase"/>
    <property type="match status" value="1"/>
</dbReference>
<dbReference type="Gene3D" id="2.60.40.2840">
    <property type="match status" value="1"/>
</dbReference>
<dbReference type="HAMAP" id="MF_03217">
    <property type="entry name" value="PEMT"/>
    <property type="match status" value="1"/>
</dbReference>
<dbReference type="InterPro" id="IPR007318">
    <property type="entry name" value="Phopholipid_MeTrfase"/>
</dbReference>
<dbReference type="InterPro" id="IPR016219">
    <property type="entry name" value="Phosphatid-EA_MeTrfase_fun"/>
</dbReference>
<dbReference type="PANTHER" id="PTHR32138">
    <property type="entry name" value="PHOSPHATIDYLETHANOLAMINE N-METHYLTRANSFERASE"/>
    <property type="match status" value="1"/>
</dbReference>
<dbReference type="PANTHER" id="PTHR32138:SF0">
    <property type="entry name" value="PHOSPHATIDYLETHANOLAMINE N-METHYLTRANSFERASE"/>
    <property type="match status" value="1"/>
</dbReference>
<dbReference type="Pfam" id="PF04191">
    <property type="entry name" value="PEMT"/>
    <property type="match status" value="2"/>
</dbReference>
<dbReference type="PIRSF" id="PIRSF000383">
    <property type="entry name" value="PEAMT"/>
    <property type="match status" value="1"/>
</dbReference>
<dbReference type="PROSITE" id="PS51598">
    <property type="entry name" value="SAM_CHO2"/>
    <property type="match status" value="1"/>
</dbReference>
<name>CHO2_CHAGB</name>
<evidence type="ECO:0000255" key="1">
    <source>
        <dbReference type="HAMAP-Rule" id="MF_03217"/>
    </source>
</evidence>
<evidence type="ECO:0000256" key="2">
    <source>
        <dbReference type="SAM" id="MobiDB-lite"/>
    </source>
</evidence>
<reference key="1">
    <citation type="journal article" date="2015" name="Genome Announc.">
        <title>Draft genome sequence of the cellulolytic fungus Chaetomium globosum.</title>
        <authorList>
            <person name="Cuomo C.A."/>
            <person name="Untereiner W.A."/>
            <person name="Ma L.-J."/>
            <person name="Grabherr M."/>
            <person name="Birren B.W."/>
        </authorList>
    </citation>
    <scope>NUCLEOTIDE SEQUENCE [LARGE SCALE GENOMIC DNA]</scope>
    <source>
        <strain>ATCC 6205 / CBS 148.51 / DSM 1962 / NBRC 6347 / NRRL 1970</strain>
    </source>
</reference>
<organism>
    <name type="scientific">Chaetomium globosum (strain ATCC 6205 / CBS 148.51 / DSM 1962 / NBRC 6347 / NRRL 1970)</name>
    <name type="common">Soil fungus</name>
    <dbReference type="NCBI Taxonomy" id="306901"/>
    <lineage>
        <taxon>Eukaryota</taxon>
        <taxon>Fungi</taxon>
        <taxon>Dikarya</taxon>
        <taxon>Ascomycota</taxon>
        <taxon>Pezizomycotina</taxon>
        <taxon>Sordariomycetes</taxon>
        <taxon>Sordariomycetidae</taxon>
        <taxon>Sordariales</taxon>
        <taxon>Chaetomiaceae</taxon>
        <taxon>Chaetomium</taxon>
    </lineage>
</organism>
<feature type="chain" id="PRO_0000405886" description="Phosphatidylethanolamine N-methyltransferase">
    <location>
        <begin position="1"/>
        <end position="946"/>
    </location>
</feature>
<feature type="topological domain" description="Lumenal" evidence="1">
    <location>
        <begin position="1"/>
        <end position="78"/>
    </location>
</feature>
<feature type="transmembrane region" description="Helical" evidence="1">
    <location>
        <begin position="79"/>
        <end position="99"/>
    </location>
</feature>
<feature type="topological domain" description="Cytoplasmic" evidence="1">
    <location>
        <begin position="100"/>
        <end position="102"/>
    </location>
</feature>
<feature type="transmembrane region" description="Helical" evidence="1">
    <location>
        <begin position="103"/>
        <end position="123"/>
    </location>
</feature>
<feature type="topological domain" description="Lumenal" evidence="1">
    <location>
        <begin position="124"/>
        <end position="188"/>
    </location>
</feature>
<feature type="transmembrane region" description="Helical" evidence="1">
    <location>
        <begin position="189"/>
        <end position="209"/>
    </location>
</feature>
<feature type="topological domain" description="Cytoplasmic" evidence="1">
    <location>
        <begin position="210"/>
        <end position="216"/>
    </location>
</feature>
<feature type="transmembrane region" description="Helical" evidence="1">
    <location>
        <begin position="217"/>
        <end position="237"/>
    </location>
</feature>
<feature type="topological domain" description="Lumenal" evidence="1">
    <location>
        <begin position="238"/>
        <end position="266"/>
    </location>
</feature>
<feature type="transmembrane region" description="Helical" evidence="1">
    <location>
        <begin position="267"/>
        <end position="287"/>
    </location>
</feature>
<feature type="topological domain" description="Cytoplasmic" evidence="1">
    <location>
        <begin position="288"/>
        <end position="293"/>
    </location>
</feature>
<feature type="transmembrane region" description="Helical" evidence="1">
    <location>
        <begin position="294"/>
        <end position="314"/>
    </location>
</feature>
<feature type="topological domain" description="Lumenal" evidence="1">
    <location>
        <begin position="315"/>
        <end position="377"/>
    </location>
</feature>
<feature type="transmembrane region" description="Helical" evidence="1">
    <location>
        <begin position="378"/>
        <end position="398"/>
    </location>
</feature>
<feature type="topological domain" description="Cytoplasmic" evidence="1">
    <location>
        <begin position="399"/>
        <end position="400"/>
    </location>
</feature>
<feature type="transmembrane region" description="Helical" evidence="1">
    <location>
        <begin position="401"/>
        <end position="421"/>
    </location>
</feature>
<feature type="topological domain" description="Lumenal" evidence="1">
    <location>
        <begin position="422"/>
        <end position="447"/>
    </location>
</feature>
<feature type="transmembrane region" description="Helical" evidence="1">
    <location>
        <begin position="448"/>
        <end position="468"/>
    </location>
</feature>
<feature type="topological domain" description="Cytoplasmic" evidence="1">
    <location>
        <begin position="469"/>
        <end position="476"/>
    </location>
</feature>
<feature type="transmembrane region" description="Helical" evidence="1">
    <location>
        <begin position="477"/>
        <end position="497"/>
    </location>
</feature>
<feature type="topological domain" description="Lumenal" evidence="1">
    <location>
        <begin position="498"/>
        <end position="555"/>
    </location>
</feature>
<feature type="transmembrane region" description="Helical" evidence="1">
    <location>
        <begin position="556"/>
        <end position="576"/>
    </location>
</feature>
<feature type="topological domain" description="Cytoplasmic" evidence="1">
    <location>
        <begin position="577"/>
        <end position="946"/>
    </location>
</feature>
<feature type="region of interest" description="Disordered" evidence="2">
    <location>
        <begin position="1"/>
        <end position="51"/>
    </location>
</feature>
<feature type="region of interest" description="Disordered" evidence="2">
    <location>
        <begin position="322"/>
        <end position="355"/>
    </location>
</feature>
<feature type="compositionally biased region" description="Basic and acidic residues" evidence="2">
    <location>
        <begin position="33"/>
        <end position="42"/>
    </location>
</feature>
<feature type="compositionally biased region" description="Low complexity" evidence="2">
    <location>
        <begin position="335"/>
        <end position="344"/>
    </location>
</feature>
<keyword id="KW-0256">Endoplasmic reticulum</keyword>
<keyword id="KW-0444">Lipid biosynthesis</keyword>
<keyword id="KW-0443">Lipid metabolism</keyword>
<keyword id="KW-0472">Membrane</keyword>
<keyword id="KW-0489">Methyltransferase</keyword>
<keyword id="KW-0594">Phospholipid biosynthesis</keyword>
<keyword id="KW-1208">Phospholipid metabolism</keyword>
<keyword id="KW-1185">Reference proteome</keyword>
<keyword id="KW-0949">S-adenosyl-L-methionine</keyword>
<keyword id="KW-0808">Transferase</keyword>
<keyword id="KW-0812">Transmembrane</keyword>
<keyword id="KW-1133">Transmembrane helix</keyword>
<gene>
    <name type="primary">CHO2</name>
    <name type="ORF">CHGG_04598</name>
</gene>
<protein>
    <recommendedName>
        <fullName evidence="1">Phosphatidylethanolamine N-methyltransferase</fullName>
        <shortName evidence="1">PE methyltransferase</shortName>
        <shortName evidence="1">PEAMT</shortName>
        <shortName evidence="1">PEMT</shortName>
        <ecNumber evidence="1">2.1.1.17</ecNumber>
    </recommendedName>
</protein>
<proteinExistence type="inferred from homology"/>
<comment type="function">
    <text evidence="1">Catalyzes the first step of the methylation pathway of phosphatidylcholine biosynthesis, the SAM-dependent methylation of phosphatidylethanolamine (PE) to phosphatidylmonomethylethanolamine (PMME).</text>
</comment>
<comment type="catalytic activity">
    <reaction evidence="1">
        <text>a 1,2-diacyl-sn-glycero-3-phosphoethanolamine + S-adenosyl-L-methionine = a 1,2-diacyl-sn-glycero-3-phospho-N-methylethanolamine + S-adenosyl-L-homocysteine + H(+)</text>
        <dbReference type="Rhea" id="RHEA:11164"/>
        <dbReference type="ChEBI" id="CHEBI:15378"/>
        <dbReference type="ChEBI" id="CHEBI:57856"/>
        <dbReference type="ChEBI" id="CHEBI:59789"/>
        <dbReference type="ChEBI" id="CHEBI:64573"/>
        <dbReference type="ChEBI" id="CHEBI:64612"/>
        <dbReference type="EC" id="2.1.1.17"/>
    </reaction>
</comment>
<comment type="pathway">
    <text evidence="1">Phospholipid metabolism; phosphatidylcholine biosynthesis.</text>
</comment>
<comment type="subcellular location">
    <subcellularLocation>
        <location evidence="1">Endoplasmic reticulum membrane</location>
        <topology evidence="1">Multi-pass membrane protein</topology>
    </subcellularLocation>
</comment>
<comment type="similarity">
    <text evidence="1">Belongs to the class VI-like SAM-binding methyltransferase superfamily. CHO2 family.</text>
</comment>